<proteinExistence type="evidence at protein level"/>
<evidence type="ECO:0000255" key="1">
    <source>
        <dbReference type="HAMAP-Rule" id="MF_03051"/>
    </source>
</evidence>
<evidence type="ECO:0000269" key="2">
    <source>
    </source>
</evidence>
<evidence type="ECO:0000269" key="3">
    <source>
    </source>
</evidence>
<evidence type="ECO:0000269" key="4">
    <source>
    </source>
</evidence>
<evidence type="ECO:0000269" key="5">
    <source>
    </source>
</evidence>
<evidence type="ECO:0000269" key="6">
    <source>
    </source>
</evidence>
<evidence type="ECO:0000269" key="7">
    <source>
    </source>
</evidence>
<evidence type="ECO:0000269" key="8">
    <source>
    </source>
</evidence>
<evidence type="ECO:0000269" key="9">
    <source>
    </source>
</evidence>
<evidence type="ECO:0000269" key="10">
    <source>
    </source>
</evidence>
<evidence type="ECO:0000269" key="11">
    <source>
    </source>
</evidence>
<evidence type="ECO:0000269" key="12">
    <source>
    </source>
</evidence>
<evidence type="ECO:0007829" key="13">
    <source>
        <dbReference type="PDB" id="5MPO"/>
    </source>
</evidence>
<name>MOC2A_HUMAN</name>
<sequence length="88" mass="9755">MVPLCQVEVLYFAKSAEITGVRSETISVPQEIKALQLWKEIETRHPGLADVRNQIIFAVRQEYVELGDQLLVLQPGDEIAVIPPISGG</sequence>
<comment type="function">
    <text evidence="1 5">Acts as a sulfur carrier required for molybdopterin biosynthesis. Component of the molybdopterin synthase complex that catalyzes the conversion of precursor Z into molybdopterin by mediating the incorporation of 2 sulfur atoms into precursor Z to generate a dithiolene group. In the complex, serves as sulfur donor by being thiocarboxylated (-COSH) at its C-terminus by MOCS3. After interaction with MOCS2B, the sulfur is then transferred to precursor Z to form molybdopterin.</text>
</comment>
<comment type="pathway">
    <text evidence="1">Cofactor biosynthesis; molybdopterin biosynthesis.</text>
</comment>
<comment type="subunit">
    <text evidence="1">Heterotetramer; composed of 2 small (MOCS2A) and 2 large (MOCS2B) subunits.</text>
</comment>
<comment type="interaction">
    <interactant intactId="EBI-9056334">
        <id>O96033</id>
    </interactant>
    <interactant intactId="EBI-723640">
        <id>O96007</id>
        <label>MOCS2</label>
    </interactant>
    <organismsDiffer>false</organismsDiffer>
    <experiments>2</experiments>
</comment>
<comment type="subcellular location">
    <subcellularLocation>
        <location evidence="1 6">Cytoplasm</location>
        <location evidence="1 6">Cytosol</location>
    </subcellularLocation>
</comment>
<comment type="tissue specificity">
    <text evidence="2 12">Widely expressed. Highest levels are found in heart and skeletal muscle. Lower levels are present in brain, kidney and pancreas. Very low levels are found in lung and peripheral blood leukocytes.</text>
</comment>
<comment type="PTM">
    <text evidence="1 5 6 7 10 11">C-terminal thiocarboxylation occurs in 2 steps, it is first acyl-adenylated (-COAMP) via the hesA/moeB/thiF part of MOCS3, then thiocarboxylated (-COSH) via the rhodanese domain of MOCS3.</text>
</comment>
<comment type="disease" evidence="3 4 5 8 9">
    <disease id="DI-01990">
        <name>Molybdenum cofactor deficiency B</name>
        <acronym>MOCODB</acronym>
        <description>An autosomal recessive metabolic disorder characterized by neonatal onset of intractable seizures, opisthotonus, and facial dysmorphism associated with hypouricemia and elevated urinary sulfite levels. Affected individuals show severe neurologic damage and often die in early childhood.</description>
        <dbReference type="MIM" id="252160"/>
    </disease>
    <text>The disease is caused by variants affecting the gene represented in this entry.</text>
</comment>
<comment type="miscellaneous">
    <text>This protein is produced by a bicistronic gene which also produces the large subunit (MOCS2B) from an overlapping reading frame. Expression of these 2 proteins are related since a mutation that removes the start codon of the small subunit (MOCS2A) also impairs expression of the large subunit (MOCS2B).</text>
</comment>
<comment type="similarity">
    <text evidence="1">Belongs to the MoaD family. MOCS2A subfamily.</text>
</comment>
<gene>
    <name evidence="1" type="primary">MOCS2</name>
    <name type="synonym">MOCO1</name>
</gene>
<reference key="1">
    <citation type="journal article" date="1999" name="Am. J. Hum. Genet.">
        <title>Human molybdopterin synthase gene: identification of a bicistronic transcript with overlapping reading frames.</title>
        <authorList>
            <person name="Stallmeyer B."/>
            <person name="Drugeon G."/>
            <person name="Reiss J."/>
            <person name="Haenni A.L."/>
            <person name="Mendel R.R."/>
        </authorList>
    </citation>
    <scope>NUCLEOTIDE SEQUENCE [MRNA]</scope>
    <scope>IDENTIFICATION OF BICISTRONIC GENE</scope>
    <scope>TISSUE SPECIFICITY</scope>
    <source>
        <tissue>Liver</tissue>
    </source>
</reference>
<reference key="2">
    <citation type="journal article" date="1999" name="Nucleic Acids Res.">
        <title>The two subunits of human molybdopterin synthase: evidence for a bicistronic messenger RNA with overlapping reading frames.</title>
        <authorList>
            <person name="Sloan J."/>
            <person name="Kinghorn J.R."/>
            <person name="Unkles S.E."/>
        </authorList>
    </citation>
    <scope>NUCLEOTIDE SEQUENCE [MRNA]</scope>
    <scope>TISSUE SPECIFICITY</scope>
</reference>
<reference key="3">
    <citation type="journal article" date="2003" name="J. Biol. Chem.">
        <title>Mechanistic studies of human molybdopterin synthase reaction and characterization of mutants identified in group B patients of molybdenum cofactor deficiency.</title>
        <authorList>
            <person name="Leimkuehler S."/>
            <person name="Freuer A."/>
            <person name="Araujo J.A."/>
            <person name="Rajagopalan K.V."/>
            <person name="Mendel R.R."/>
        </authorList>
    </citation>
    <scope>FUNCTION</scope>
    <scope>SUBUNIT</scope>
    <scope>THIOCARBOXYLATION AT GLY-88</scope>
    <scope>CHARACTERIZATION OF VARIANT MOCODB PHE-7</scope>
</reference>
<reference key="4">
    <citation type="journal article" date="2004" name="Proc. Natl. Acad. Sci. U.S.A.">
        <title>Evidence for the physiological role of a rhodanese-like protein for the biosynthesis of the molybdenum cofactor in humans.</title>
        <authorList>
            <person name="Matthies A."/>
            <person name="Rajagopalan K.V."/>
            <person name="Mendel R.R."/>
            <person name="Leimkuehler S."/>
        </authorList>
    </citation>
    <scope>SUBCELLULAR LOCATION</scope>
    <scope>AMPYLATION AT GLY-88</scope>
    <scope>THIOCARBOXYLATION AT GLY-88</scope>
</reference>
<reference key="5">
    <citation type="journal article" date="2005" name="Biochemistry">
        <title>Molybdenum cofactor biosynthesis in humans: identification of a persulfide group in the rhodanese-like domain of MOCS3 by mass spectrometry.</title>
        <authorList>
            <person name="Matthies A."/>
            <person name="Nimtz M."/>
            <person name="Leimkuehler S."/>
        </authorList>
    </citation>
    <scope>THIOCARBOXYLATION AT GLY-88</scope>
</reference>
<reference key="6">
    <citation type="journal article" date="2007" name="FEBS J.">
        <title>Site-directed mutagenesis of the active site loop of the rhodanese-like domain of the human molybdopterin synthase sulfurase MOCS3. Major differences in substrate specificity between eukaryotic and bacterial homologs.</title>
        <authorList>
            <person name="Krepinsky K."/>
            <person name="Leimkuehler S."/>
        </authorList>
    </citation>
    <scope>THIOCARBOXYLATION AT GLY-88</scope>
</reference>
<reference key="7">
    <citation type="journal article" date="2008" name="Biochemistry">
        <title>The sulfurtransferase activity of Uba4 presents a link between ubiquitin-like protein conjugation and activation of sulfur carrier proteins.</title>
        <authorList>
            <person name="Schmitz J."/>
            <person name="Chowdhury M.M."/>
            <person name="Haenzelmann P."/>
            <person name="Nimtz M."/>
            <person name="Lee E.Y."/>
            <person name="Schindelin H."/>
            <person name="Leimkuehler S."/>
        </authorList>
    </citation>
    <scope>THIOCARBOXYLATION AT GLY-88</scope>
</reference>
<reference key="8">
    <citation type="journal article" date="1999" name="Am. J. Hum. Genet.">
        <title>Human molybdopterin synthase gene: genomic structure and mutations in molybdenum cofactor deficiency type B.</title>
        <authorList>
            <person name="Reiss J."/>
            <person name="Dorche C."/>
            <person name="Stallmeyer B."/>
            <person name="Mendel R.R."/>
            <person name="Cohen N."/>
            <person name="Zabot M.-T."/>
        </authorList>
    </citation>
    <scope>INVOLVEMENT IN MOCODB</scope>
</reference>
<reference key="9">
    <citation type="journal article" date="2011" name="BMC Syst. Biol.">
        <title>Initial characterization of the human central proteome.</title>
        <authorList>
            <person name="Burkard T.R."/>
            <person name="Planyavsky M."/>
            <person name="Kaupe I."/>
            <person name="Breitwieser F.P."/>
            <person name="Buerckstuemmer T."/>
            <person name="Bennett K.L."/>
            <person name="Superti-Furga G."/>
            <person name="Colinge J."/>
        </authorList>
    </citation>
    <scope>IDENTIFICATION BY MASS SPECTROMETRY [LARGE SCALE ANALYSIS]</scope>
</reference>
<reference key="10">
    <citation type="journal article" date="2014" name="J. Proteomics">
        <title>An enzyme assisted RP-RPLC approach for in-depth analysis of human liver phosphoproteome.</title>
        <authorList>
            <person name="Bian Y."/>
            <person name="Song C."/>
            <person name="Cheng K."/>
            <person name="Dong M."/>
            <person name="Wang F."/>
            <person name="Huang J."/>
            <person name="Sun D."/>
            <person name="Wang L."/>
            <person name="Ye M."/>
            <person name="Zou H."/>
        </authorList>
    </citation>
    <scope>IDENTIFICATION BY MASS SPECTROMETRY [LARGE SCALE ANALYSIS]</scope>
    <source>
        <tissue>Liver</tissue>
    </source>
</reference>
<reference key="11">
    <citation type="journal article" date="2001" name="Am. J. Med. Genet.">
        <title>Molybdopterin synthase mutations in a mild case of molybdenum cofactor deficiency.</title>
        <authorList>
            <person name="Johnson J.L."/>
            <person name="Coyne K.E."/>
            <person name="Rajagopalan K.V."/>
            <person name="Van Hove J.L.K."/>
            <person name="Mackay M."/>
            <person name="Pitt J."/>
            <person name="Boneh A."/>
        </authorList>
    </citation>
    <scope>VARIANT MOCODB PHE-7</scope>
</reference>
<reference key="12">
    <citation type="journal article" date="2005" name="Hum. Genet.">
        <title>Ten novel mutations in the molybdenum cofactor genes MOCS1 and MOCS2 and in vitro characterization of a MOCS2 mutation that abolishes the binding ability of molybdopterin synthase.</title>
        <authorList>
            <person name="Leimkuehler S."/>
            <person name="Charcosset M."/>
            <person name="Latour P."/>
            <person name="Dorche C."/>
            <person name="Kleppe S."/>
            <person name="Scaglia F."/>
            <person name="Szymczak I."/>
            <person name="Schupp P."/>
            <person name="Hahnewald R."/>
            <person name="Reiss J."/>
        </authorList>
    </citation>
    <scope>INVOLVEMENT IN MOCODB</scope>
</reference>
<reference key="13">
    <citation type="journal article" date="2006" name="Mol. Genet. Metab.">
        <title>A novel MOCS2 mutation reveals coordinated expression of the small and large subunit of molybdopterin synthase.</title>
        <authorList>
            <person name="Hahnewald R."/>
            <person name="Leimkuehler S."/>
            <person name="Vilaseca A."/>
            <person name="Acquaviva-Bourdain C."/>
            <person name="Lenz U."/>
            <person name="Reiss J."/>
        </authorList>
    </citation>
    <scope>INVOLVEMENT IN MOCODB</scope>
</reference>
<feature type="chain" id="PRO_0000209134" description="Molybdopterin synthase sulfur carrier subunit">
    <location>
        <begin position="1"/>
        <end position="88"/>
    </location>
</feature>
<feature type="modified residue" description="1-thioglycine; alternate" evidence="1 5 6 7 10 11">
    <location>
        <position position="88"/>
    </location>
</feature>
<feature type="modified residue" description="Glycyl adenylate; alternate" evidence="1 6">
    <location>
        <position position="88"/>
    </location>
</feature>
<feature type="sequence variant" id="VAR_054854" description="In MOCODB; in a patient with mild form of the disease; impairs interaction with MOCS2B; dbSNP:rs121908608." evidence="4 5">
    <original>V</original>
    <variation>F</variation>
    <location>
        <position position="7"/>
    </location>
</feature>
<feature type="sequence variant" id="VAR_050090" description="In dbSNP:rs2233210.">
    <original>V</original>
    <variation>A</variation>
    <location>
        <position position="51"/>
    </location>
</feature>
<feature type="strand" evidence="13">
    <location>
        <begin position="7"/>
        <end position="11"/>
    </location>
</feature>
<feature type="helix" evidence="13">
    <location>
        <begin position="14"/>
        <end position="19"/>
    </location>
</feature>
<feature type="strand" evidence="13">
    <location>
        <begin position="22"/>
        <end position="27"/>
    </location>
</feature>
<feature type="strand" evidence="13">
    <location>
        <begin position="30"/>
        <end position="33"/>
    </location>
</feature>
<feature type="helix" evidence="13">
    <location>
        <begin position="34"/>
        <end position="44"/>
    </location>
</feature>
<feature type="helix" evidence="13">
    <location>
        <begin position="46"/>
        <end position="54"/>
    </location>
</feature>
<feature type="strand" evidence="13">
    <location>
        <begin position="56"/>
        <end position="59"/>
    </location>
</feature>
<feature type="strand" evidence="13">
    <location>
        <begin position="62"/>
        <end position="64"/>
    </location>
</feature>
<feature type="strand" evidence="13">
    <location>
        <begin position="66"/>
        <end position="68"/>
    </location>
</feature>
<feature type="strand" evidence="13">
    <location>
        <begin position="70"/>
        <end position="72"/>
    </location>
</feature>
<feature type="strand" evidence="13">
    <location>
        <begin position="78"/>
        <end position="82"/>
    </location>
</feature>
<protein>
    <recommendedName>
        <fullName evidence="1">Molybdopterin synthase sulfur carrier subunit</fullName>
    </recommendedName>
    <alternativeName>
        <fullName>MOCO1-A</fullName>
    </alternativeName>
    <alternativeName>
        <fullName evidence="1">Molybdenum cofactor synthesis protein 2 small subunit</fullName>
    </alternativeName>
    <alternativeName>
        <fullName evidence="1">Molybdenum cofactor synthesis protein 2A</fullName>
        <shortName evidence="1">MOCS2A</shortName>
    </alternativeName>
    <alternativeName>
        <fullName>Molybdopterin-synthase small subunit</fullName>
    </alternativeName>
    <alternativeName>
        <fullName evidence="1">Sulfur carrier protein MOCS2A</fullName>
    </alternativeName>
</protein>
<dbReference type="EMBL" id="AF091871">
    <property type="protein sequence ID" value="AAD14598.1"/>
    <property type="molecule type" value="mRNA"/>
</dbReference>
<dbReference type="EMBL" id="AF117815">
    <property type="protein sequence ID" value="AAD13296.1"/>
    <property type="molecule type" value="mRNA"/>
</dbReference>
<dbReference type="CCDS" id="CCDS47205.1"/>
<dbReference type="PIR" id="A59370">
    <property type="entry name" value="A59370"/>
</dbReference>
<dbReference type="RefSeq" id="NP_789776.1">
    <property type="nucleotide sequence ID" value="NM_176806.4"/>
</dbReference>
<dbReference type="PDB" id="5MPO">
    <property type="method" value="X-ray"/>
    <property type="resolution" value="2.43 A"/>
    <property type="chains" value="A/B=7-88"/>
</dbReference>
<dbReference type="PDBsum" id="5MPO"/>
<dbReference type="SMR" id="O96033"/>
<dbReference type="BioGRID" id="110481">
    <property type="interactions" value="22"/>
</dbReference>
<dbReference type="ComplexPortal" id="CPX-6341">
    <property type="entry name" value="Molybdopterin synthase complex"/>
</dbReference>
<dbReference type="CORUM" id="O96033"/>
<dbReference type="IntAct" id="O96033">
    <property type="interactions" value="3"/>
</dbReference>
<dbReference type="MINT" id="O96033"/>
<dbReference type="iPTMnet" id="O96033"/>
<dbReference type="BioMuta" id="MOCS2"/>
<dbReference type="jPOST" id="O96033"/>
<dbReference type="MassIVE" id="O96033"/>
<dbReference type="ProteomicsDB" id="51223"/>
<dbReference type="Pumba" id="O96033"/>
<dbReference type="Antibodypedia" id="23330">
    <property type="antibodies" value="148 antibodies from 23 providers"/>
</dbReference>
<dbReference type="DNASU" id="4338"/>
<dbReference type="Ensembl" id="ENST00000361377.8">
    <property type="protein sequence ID" value="ENSP00000355160.4"/>
    <property type="gene ID" value="ENSG00000164172.20"/>
</dbReference>
<dbReference type="Ensembl" id="ENST00000450852.8">
    <property type="protein sequence ID" value="ENSP00000411022.3"/>
    <property type="gene ID" value="ENSG00000164172.20"/>
</dbReference>
<dbReference type="Ensembl" id="ENST00000508922.5">
    <property type="protein sequence ID" value="ENSP00000426274.1"/>
    <property type="gene ID" value="ENSG00000164172.20"/>
</dbReference>
<dbReference type="Ensembl" id="ENST00000510818.6">
    <property type="protein sequence ID" value="ENSP00000424267.2"/>
    <property type="gene ID" value="ENSG00000164172.20"/>
</dbReference>
<dbReference type="Ensembl" id="ENST00000582677.5">
    <property type="protein sequence ID" value="ENSP00000462870.1"/>
    <property type="gene ID" value="ENSG00000164172.20"/>
</dbReference>
<dbReference type="Ensembl" id="ENST00000584946.5">
    <property type="protein sequence ID" value="ENSP00000464663.1"/>
    <property type="gene ID" value="ENSG00000164172.20"/>
</dbReference>
<dbReference type="GeneID" id="4338"/>
<dbReference type="UCSC" id="uc011cqf.4">
    <property type="organism name" value="human"/>
</dbReference>
<dbReference type="AGR" id="HGNC:7193"/>
<dbReference type="CTD" id="4338"/>
<dbReference type="DisGeNET" id="4338"/>
<dbReference type="GeneCards" id="MOCS2"/>
<dbReference type="GeneReviews" id="MOCS2"/>
<dbReference type="HGNC" id="HGNC:7193">
    <property type="gene designation" value="MOCS2"/>
</dbReference>
<dbReference type="HPA" id="ENSG00000164172">
    <property type="expression patterns" value="Low tissue specificity"/>
</dbReference>
<dbReference type="MalaCards" id="MOCS2"/>
<dbReference type="MIM" id="252160">
    <property type="type" value="phenotype"/>
</dbReference>
<dbReference type="MIM" id="603708">
    <property type="type" value="gene"/>
</dbReference>
<dbReference type="neXtProt" id="NX_O96033"/>
<dbReference type="OpenTargets" id="ENSG00000164172"/>
<dbReference type="PharmGKB" id="PA30903"/>
<dbReference type="VEuPathDB" id="HostDB:ENSG00000164172"/>
<dbReference type="GeneTree" id="ENSGT00510000047669"/>
<dbReference type="OrthoDB" id="5531344at2759"/>
<dbReference type="BioCyc" id="MetaCyc:MONOMER-16667"/>
<dbReference type="PathwayCommons" id="O96033"/>
<dbReference type="Reactome" id="R-HSA-947581">
    <property type="pathway name" value="Molybdenum cofactor biosynthesis"/>
</dbReference>
<dbReference type="SignaLink" id="O96033"/>
<dbReference type="UniPathway" id="UPA00344"/>
<dbReference type="BioGRID-ORCS" id="4338">
    <property type="hits" value="21 hits in 1157 CRISPR screens"/>
</dbReference>
<dbReference type="ChiTaRS" id="MOCS2">
    <property type="organism name" value="human"/>
</dbReference>
<dbReference type="GenomeRNAi" id="4338"/>
<dbReference type="Pharos" id="O96033">
    <property type="development level" value="Tbio"/>
</dbReference>
<dbReference type="Proteomes" id="UP000005640">
    <property type="component" value="Chromosome 5"/>
</dbReference>
<dbReference type="Bgee" id="ENSG00000164172">
    <property type="expression patterns" value="Expressed in anterior cingulate cortex and 200 other cell types or tissues"/>
</dbReference>
<dbReference type="ExpressionAtlas" id="O96033">
    <property type="expression patterns" value="baseline and differential"/>
</dbReference>
<dbReference type="GO" id="GO:0005829">
    <property type="term" value="C:cytosol"/>
    <property type="evidence" value="ECO:0000314"/>
    <property type="project" value="UniProtKB"/>
</dbReference>
<dbReference type="GO" id="GO:1990140">
    <property type="term" value="C:molybdopterin synthase complex"/>
    <property type="evidence" value="ECO:0000314"/>
    <property type="project" value="UniProtKB"/>
</dbReference>
<dbReference type="GO" id="GO:0030366">
    <property type="term" value="F:molybdopterin synthase activity"/>
    <property type="evidence" value="ECO:0007669"/>
    <property type="project" value="UniProtKB-UniRule"/>
</dbReference>
<dbReference type="GO" id="GO:0000166">
    <property type="term" value="F:nucleotide binding"/>
    <property type="evidence" value="ECO:0007669"/>
    <property type="project" value="UniProtKB-KW"/>
</dbReference>
<dbReference type="GO" id="GO:0006777">
    <property type="term" value="P:Mo-molybdopterin cofactor biosynthetic process"/>
    <property type="evidence" value="ECO:0000314"/>
    <property type="project" value="UniProtKB"/>
</dbReference>
<dbReference type="CDD" id="cd00754">
    <property type="entry name" value="Ubl_MoaD"/>
    <property type="match status" value="1"/>
</dbReference>
<dbReference type="FunFam" id="3.10.20.30:FF:000010">
    <property type="entry name" value="Molybdopterin synthase sulfur carrier subunit"/>
    <property type="match status" value="1"/>
</dbReference>
<dbReference type="Gene3D" id="3.10.20.30">
    <property type="match status" value="1"/>
</dbReference>
<dbReference type="HAMAP" id="MF_03051">
    <property type="entry name" value="MOCS2A"/>
    <property type="match status" value="1"/>
</dbReference>
<dbReference type="InterPro" id="IPR012675">
    <property type="entry name" value="Beta-grasp_dom_sf"/>
</dbReference>
<dbReference type="InterPro" id="IPR044672">
    <property type="entry name" value="MOCS2A"/>
</dbReference>
<dbReference type="InterPro" id="IPR028887">
    <property type="entry name" value="MOCS2A_euk"/>
</dbReference>
<dbReference type="InterPro" id="IPR016155">
    <property type="entry name" value="Mopterin_synth/thiamin_S_b"/>
</dbReference>
<dbReference type="InterPro" id="IPR003749">
    <property type="entry name" value="ThiS/MoaD-like"/>
</dbReference>
<dbReference type="NCBIfam" id="TIGR01682">
    <property type="entry name" value="moaD"/>
    <property type="match status" value="1"/>
</dbReference>
<dbReference type="PANTHER" id="PTHR33359">
    <property type="entry name" value="MOLYBDOPTERIN SYNTHASE SULFUR CARRIER SUBUNIT"/>
    <property type="match status" value="1"/>
</dbReference>
<dbReference type="PANTHER" id="PTHR33359:SF1">
    <property type="entry name" value="MOLYBDOPTERIN SYNTHASE SULFUR CARRIER SUBUNIT"/>
    <property type="match status" value="1"/>
</dbReference>
<dbReference type="Pfam" id="PF02597">
    <property type="entry name" value="ThiS"/>
    <property type="match status" value="1"/>
</dbReference>
<dbReference type="SUPFAM" id="SSF54285">
    <property type="entry name" value="MoaD/ThiS"/>
    <property type="match status" value="1"/>
</dbReference>
<organism>
    <name type="scientific">Homo sapiens</name>
    <name type="common">Human</name>
    <dbReference type="NCBI Taxonomy" id="9606"/>
    <lineage>
        <taxon>Eukaryota</taxon>
        <taxon>Metazoa</taxon>
        <taxon>Chordata</taxon>
        <taxon>Craniata</taxon>
        <taxon>Vertebrata</taxon>
        <taxon>Euteleostomi</taxon>
        <taxon>Mammalia</taxon>
        <taxon>Eutheria</taxon>
        <taxon>Euarchontoglires</taxon>
        <taxon>Primates</taxon>
        <taxon>Haplorrhini</taxon>
        <taxon>Catarrhini</taxon>
        <taxon>Hominidae</taxon>
        <taxon>Homo</taxon>
    </lineage>
</organism>
<accession>O96033</accession>
<keyword id="KW-0002">3D-structure</keyword>
<keyword id="KW-0963">Cytoplasm</keyword>
<keyword id="KW-0225">Disease variant</keyword>
<keyword id="KW-0501">Molybdenum cofactor biosynthesis</keyword>
<keyword id="KW-0547">Nucleotide-binding</keyword>
<keyword id="KW-0597">Phosphoprotein</keyword>
<keyword id="KW-1267">Proteomics identification</keyword>
<keyword id="KW-1185">Reference proteome</keyword>